<protein>
    <recommendedName>
        <fullName evidence="1">Phospho-N-acetylmuramoyl-pentapeptide-transferase</fullName>
        <ecNumber evidence="1">2.7.8.13</ecNumber>
    </recommendedName>
    <alternativeName>
        <fullName evidence="1">UDP-MurNAc-pentapeptide phosphotransferase</fullName>
    </alternativeName>
</protein>
<accession>B0CHM3</accession>
<sequence length="360" mass="38745">MLMFLTHFAEHVTPFNVFRYITFRTGGAMITSALIVFLFGPTIINSLRVRQGKGQPIRADGPQTHFKKAGTPTMGGLMIMTGILASCLLWANLASVYVWVVLMVSVGFGAIGFYDDYLKVTKQSDKGFSGKARLGIEFLIAAIAAFTIMRAGQEPFSSSLTFPFVKQLVINLSWFFIPFAAFVMVGAGNAVNLTDGLDGLAIVPVMVAAASFGFIAYLSGNAIFADYLQIHFVPGTGELAVVLGAVIGAGLGFLWFNAPPAAIFMGDTGSLALGGMLGTVAVATKHEIVLAIIGGLFVMEALSVIIQVGFFKMTGRRVFLMAPIHHHFEKKGWTESQVVIRFWIVAIILAMIGLSTLKLR</sequence>
<reference key="1">
    <citation type="submission" date="2007-12" db="EMBL/GenBank/DDBJ databases">
        <title>Brucella suis ATCC 23445 whole genome shotgun sequencing project.</title>
        <authorList>
            <person name="Setubal J.C."/>
            <person name="Bowns C."/>
            <person name="Boyle S."/>
            <person name="Crasta O.R."/>
            <person name="Czar M.J."/>
            <person name="Dharmanolla C."/>
            <person name="Gillespie J.J."/>
            <person name="Kenyon R.W."/>
            <person name="Lu J."/>
            <person name="Mane S."/>
            <person name="Mohapatra S."/>
            <person name="Nagrani S."/>
            <person name="Purkayastha A."/>
            <person name="Rajasimha H.K."/>
            <person name="Shallom J.M."/>
            <person name="Shallom S."/>
            <person name="Shukla M."/>
            <person name="Snyder E.E."/>
            <person name="Sobral B.W."/>
            <person name="Wattam A.R."/>
            <person name="Will R."/>
            <person name="Williams K."/>
            <person name="Yoo H."/>
            <person name="Bruce D."/>
            <person name="Detter C."/>
            <person name="Munk C."/>
            <person name="Brettin T.S."/>
        </authorList>
    </citation>
    <scope>NUCLEOTIDE SEQUENCE [LARGE SCALE GENOMIC DNA]</scope>
    <source>
        <strain>ATCC 23445 / NCTC 10510</strain>
    </source>
</reference>
<gene>
    <name evidence="1" type="primary">mraY</name>
    <name type="ordered locus">BSUIS_A1486</name>
</gene>
<evidence type="ECO:0000255" key="1">
    <source>
        <dbReference type="HAMAP-Rule" id="MF_00038"/>
    </source>
</evidence>
<feature type="chain" id="PRO_1000074535" description="Phospho-N-acetylmuramoyl-pentapeptide-transferase">
    <location>
        <begin position="1"/>
        <end position="360"/>
    </location>
</feature>
<feature type="transmembrane region" description="Helical" evidence="1">
    <location>
        <begin position="27"/>
        <end position="47"/>
    </location>
</feature>
<feature type="transmembrane region" description="Helical" evidence="1">
    <location>
        <begin position="71"/>
        <end position="91"/>
    </location>
</feature>
<feature type="transmembrane region" description="Helical" evidence="1">
    <location>
        <begin position="93"/>
        <end position="113"/>
    </location>
</feature>
<feature type="transmembrane region" description="Helical" evidence="1">
    <location>
        <begin position="128"/>
        <end position="148"/>
    </location>
</feature>
<feature type="transmembrane region" description="Helical" evidence="1">
    <location>
        <begin position="168"/>
        <end position="188"/>
    </location>
</feature>
<feature type="transmembrane region" description="Helical" evidence="1">
    <location>
        <begin position="199"/>
        <end position="219"/>
    </location>
</feature>
<feature type="transmembrane region" description="Helical" evidence="1">
    <location>
        <begin position="239"/>
        <end position="259"/>
    </location>
</feature>
<feature type="transmembrane region" description="Helical" evidence="1">
    <location>
        <begin position="262"/>
        <end position="282"/>
    </location>
</feature>
<feature type="transmembrane region" description="Helical" evidence="1">
    <location>
        <begin position="288"/>
        <end position="308"/>
    </location>
</feature>
<feature type="transmembrane region" description="Helical" evidence="1">
    <location>
        <begin position="337"/>
        <end position="357"/>
    </location>
</feature>
<comment type="function">
    <text evidence="1">Catalyzes the initial step of the lipid cycle reactions in the biosynthesis of the cell wall peptidoglycan: transfers peptidoglycan precursor phospho-MurNAc-pentapeptide from UDP-MurNAc-pentapeptide onto the lipid carrier undecaprenyl phosphate, yielding undecaprenyl-pyrophosphoryl-MurNAc-pentapeptide, known as lipid I.</text>
</comment>
<comment type="catalytic activity">
    <reaction evidence="1">
        <text>UDP-N-acetyl-alpha-D-muramoyl-L-alanyl-gamma-D-glutamyl-meso-2,6-diaminopimeloyl-D-alanyl-D-alanine + di-trans,octa-cis-undecaprenyl phosphate = di-trans,octa-cis-undecaprenyl diphospho-N-acetyl-alpha-D-muramoyl-L-alanyl-D-glutamyl-meso-2,6-diaminopimeloyl-D-alanyl-D-alanine + UMP</text>
        <dbReference type="Rhea" id="RHEA:28386"/>
        <dbReference type="ChEBI" id="CHEBI:57865"/>
        <dbReference type="ChEBI" id="CHEBI:60392"/>
        <dbReference type="ChEBI" id="CHEBI:61386"/>
        <dbReference type="ChEBI" id="CHEBI:61387"/>
        <dbReference type="EC" id="2.7.8.13"/>
    </reaction>
</comment>
<comment type="cofactor">
    <cofactor evidence="1">
        <name>Mg(2+)</name>
        <dbReference type="ChEBI" id="CHEBI:18420"/>
    </cofactor>
</comment>
<comment type="pathway">
    <text evidence="1">Cell wall biogenesis; peptidoglycan biosynthesis.</text>
</comment>
<comment type="subcellular location">
    <subcellularLocation>
        <location evidence="1">Cell inner membrane</location>
        <topology evidence="1">Multi-pass membrane protein</topology>
    </subcellularLocation>
</comment>
<comment type="similarity">
    <text evidence="1">Belongs to the glycosyltransferase 4 family. MraY subfamily.</text>
</comment>
<organism>
    <name type="scientific">Brucella suis (strain ATCC 23445 / NCTC 10510)</name>
    <dbReference type="NCBI Taxonomy" id="470137"/>
    <lineage>
        <taxon>Bacteria</taxon>
        <taxon>Pseudomonadati</taxon>
        <taxon>Pseudomonadota</taxon>
        <taxon>Alphaproteobacteria</taxon>
        <taxon>Hyphomicrobiales</taxon>
        <taxon>Brucellaceae</taxon>
        <taxon>Brucella/Ochrobactrum group</taxon>
        <taxon>Brucella</taxon>
    </lineage>
</organism>
<dbReference type="EC" id="2.7.8.13" evidence="1"/>
<dbReference type="EMBL" id="CP000911">
    <property type="protein sequence ID" value="ABY38524.1"/>
    <property type="molecule type" value="Genomic_DNA"/>
</dbReference>
<dbReference type="RefSeq" id="WP_002964542.1">
    <property type="nucleotide sequence ID" value="NC_010169.1"/>
</dbReference>
<dbReference type="SMR" id="B0CHM3"/>
<dbReference type="GeneID" id="93016268"/>
<dbReference type="KEGG" id="bmt:BSUIS_A1486"/>
<dbReference type="HOGENOM" id="CLU_023982_0_0_5"/>
<dbReference type="UniPathway" id="UPA00219"/>
<dbReference type="Proteomes" id="UP000008545">
    <property type="component" value="Chromosome I"/>
</dbReference>
<dbReference type="GO" id="GO:0005886">
    <property type="term" value="C:plasma membrane"/>
    <property type="evidence" value="ECO:0007669"/>
    <property type="project" value="UniProtKB-SubCell"/>
</dbReference>
<dbReference type="GO" id="GO:0046872">
    <property type="term" value="F:metal ion binding"/>
    <property type="evidence" value="ECO:0007669"/>
    <property type="project" value="UniProtKB-KW"/>
</dbReference>
<dbReference type="GO" id="GO:0008963">
    <property type="term" value="F:phospho-N-acetylmuramoyl-pentapeptide-transferase activity"/>
    <property type="evidence" value="ECO:0007669"/>
    <property type="project" value="UniProtKB-UniRule"/>
</dbReference>
<dbReference type="GO" id="GO:0051992">
    <property type="term" value="F:UDP-N-acetylmuramoyl-L-alanyl-D-glutamyl-meso-2,6-diaminopimelyl-D-alanyl-D-alanine:undecaprenyl-phosphate transferase activity"/>
    <property type="evidence" value="ECO:0007669"/>
    <property type="project" value="RHEA"/>
</dbReference>
<dbReference type="GO" id="GO:0051301">
    <property type="term" value="P:cell division"/>
    <property type="evidence" value="ECO:0007669"/>
    <property type="project" value="UniProtKB-KW"/>
</dbReference>
<dbReference type="GO" id="GO:0071555">
    <property type="term" value="P:cell wall organization"/>
    <property type="evidence" value="ECO:0007669"/>
    <property type="project" value="UniProtKB-KW"/>
</dbReference>
<dbReference type="GO" id="GO:0009252">
    <property type="term" value="P:peptidoglycan biosynthetic process"/>
    <property type="evidence" value="ECO:0007669"/>
    <property type="project" value="UniProtKB-UniRule"/>
</dbReference>
<dbReference type="GO" id="GO:0008360">
    <property type="term" value="P:regulation of cell shape"/>
    <property type="evidence" value="ECO:0007669"/>
    <property type="project" value="UniProtKB-KW"/>
</dbReference>
<dbReference type="CDD" id="cd06852">
    <property type="entry name" value="GT_MraY"/>
    <property type="match status" value="1"/>
</dbReference>
<dbReference type="HAMAP" id="MF_00038">
    <property type="entry name" value="MraY"/>
    <property type="match status" value="1"/>
</dbReference>
<dbReference type="InterPro" id="IPR000715">
    <property type="entry name" value="Glycosyl_transferase_4"/>
</dbReference>
<dbReference type="InterPro" id="IPR003524">
    <property type="entry name" value="PNAcMuramoyl-5peptid_Trfase"/>
</dbReference>
<dbReference type="InterPro" id="IPR018480">
    <property type="entry name" value="PNAcMuramoyl-5peptid_Trfase_CS"/>
</dbReference>
<dbReference type="NCBIfam" id="TIGR00445">
    <property type="entry name" value="mraY"/>
    <property type="match status" value="1"/>
</dbReference>
<dbReference type="PANTHER" id="PTHR22926">
    <property type="entry name" value="PHOSPHO-N-ACETYLMURAMOYL-PENTAPEPTIDE-TRANSFERASE"/>
    <property type="match status" value="1"/>
</dbReference>
<dbReference type="PANTHER" id="PTHR22926:SF5">
    <property type="entry name" value="PHOSPHO-N-ACETYLMURAMOYL-PENTAPEPTIDE-TRANSFERASE HOMOLOG"/>
    <property type="match status" value="1"/>
</dbReference>
<dbReference type="Pfam" id="PF00953">
    <property type="entry name" value="Glycos_transf_4"/>
    <property type="match status" value="1"/>
</dbReference>
<dbReference type="Pfam" id="PF10555">
    <property type="entry name" value="MraY_sig1"/>
    <property type="match status" value="1"/>
</dbReference>
<dbReference type="PROSITE" id="PS01347">
    <property type="entry name" value="MRAY_1"/>
    <property type="match status" value="1"/>
</dbReference>
<dbReference type="PROSITE" id="PS01348">
    <property type="entry name" value="MRAY_2"/>
    <property type="match status" value="1"/>
</dbReference>
<keyword id="KW-0131">Cell cycle</keyword>
<keyword id="KW-0132">Cell division</keyword>
<keyword id="KW-0997">Cell inner membrane</keyword>
<keyword id="KW-1003">Cell membrane</keyword>
<keyword id="KW-0133">Cell shape</keyword>
<keyword id="KW-0961">Cell wall biogenesis/degradation</keyword>
<keyword id="KW-0460">Magnesium</keyword>
<keyword id="KW-0472">Membrane</keyword>
<keyword id="KW-0479">Metal-binding</keyword>
<keyword id="KW-0573">Peptidoglycan synthesis</keyword>
<keyword id="KW-0808">Transferase</keyword>
<keyword id="KW-0812">Transmembrane</keyword>
<keyword id="KW-1133">Transmembrane helix</keyword>
<proteinExistence type="inferred from homology"/>
<name>MRAY_BRUSI</name>